<reference key="1">
    <citation type="journal article" date="1993" name="Mol. Immunol.">
        <title>Recombination activating genes-1 and -2 of the rabbit: cloning and characterization of germline and expressed genes.</title>
        <authorList>
            <person name="Fuschiotti P."/>
            <person name="Harindranath N."/>
            <person name="Mage R.G."/>
            <person name="McCormack W.T."/>
            <person name="Dhanarajan P."/>
            <person name="Roux K.H."/>
        </authorList>
    </citation>
    <scope>NUCLEOTIDE SEQUENCE [GENOMIC DNA]</scope>
</reference>
<proteinExistence type="inferred from homology"/>
<dbReference type="EC" id="3.1.-.-"/>
<dbReference type="EC" id="2.3.2.27"/>
<dbReference type="EMBL" id="M77666">
    <property type="protein sequence ID" value="AAA03025.1"/>
    <property type="molecule type" value="Genomic_DNA"/>
</dbReference>
<dbReference type="PIR" id="S42511">
    <property type="entry name" value="S42511"/>
</dbReference>
<dbReference type="RefSeq" id="NP_001164611.1">
    <property type="nucleotide sequence ID" value="NM_001171140.1"/>
</dbReference>
<dbReference type="SMR" id="P34088"/>
<dbReference type="FunCoup" id="P34088">
    <property type="interactions" value="99"/>
</dbReference>
<dbReference type="STRING" id="9986.ENSOCUP00000020586"/>
<dbReference type="PaxDb" id="9986-ENSOCUP00000020586"/>
<dbReference type="GeneID" id="100328950"/>
<dbReference type="KEGG" id="ocu:100328950"/>
<dbReference type="CTD" id="5896"/>
<dbReference type="eggNOG" id="ENOG502QSFV">
    <property type="taxonomic scope" value="Eukaryota"/>
</dbReference>
<dbReference type="InParanoid" id="P34088"/>
<dbReference type="OrthoDB" id="6270329at2759"/>
<dbReference type="Proteomes" id="UP000001811">
    <property type="component" value="Unplaced"/>
</dbReference>
<dbReference type="GO" id="GO:0097519">
    <property type="term" value="C:DNA recombinase complex"/>
    <property type="evidence" value="ECO:0007669"/>
    <property type="project" value="TreeGrafter"/>
</dbReference>
<dbReference type="GO" id="GO:1905347">
    <property type="term" value="C:endodeoxyribonuclease complex"/>
    <property type="evidence" value="ECO:0007669"/>
    <property type="project" value="TreeGrafter"/>
</dbReference>
<dbReference type="GO" id="GO:0005634">
    <property type="term" value="C:nucleus"/>
    <property type="evidence" value="ECO:0000250"/>
    <property type="project" value="UniProtKB"/>
</dbReference>
<dbReference type="GO" id="GO:1990238">
    <property type="term" value="F:double-stranded DNA endonuclease activity"/>
    <property type="evidence" value="ECO:0007669"/>
    <property type="project" value="TreeGrafter"/>
</dbReference>
<dbReference type="GO" id="GO:0004519">
    <property type="term" value="F:endonuclease activity"/>
    <property type="evidence" value="ECO:0000250"/>
    <property type="project" value="UniProtKB"/>
</dbReference>
<dbReference type="GO" id="GO:0042393">
    <property type="term" value="F:histone binding"/>
    <property type="evidence" value="ECO:0000250"/>
    <property type="project" value="UniProtKB"/>
</dbReference>
<dbReference type="GO" id="GO:0046872">
    <property type="term" value="F:metal ion binding"/>
    <property type="evidence" value="ECO:0000250"/>
    <property type="project" value="UniProtKB"/>
</dbReference>
<dbReference type="GO" id="GO:0042803">
    <property type="term" value="F:protein homodimerization activity"/>
    <property type="evidence" value="ECO:0000250"/>
    <property type="project" value="UniProtKB"/>
</dbReference>
<dbReference type="GO" id="GO:0043565">
    <property type="term" value="F:sequence-specific DNA binding"/>
    <property type="evidence" value="ECO:0000250"/>
    <property type="project" value="UniProtKB"/>
</dbReference>
<dbReference type="GO" id="GO:0061630">
    <property type="term" value="F:ubiquitin protein ligase activity"/>
    <property type="evidence" value="ECO:0007669"/>
    <property type="project" value="InterPro"/>
</dbReference>
<dbReference type="GO" id="GO:0004842">
    <property type="term" value="F:ubiquitin-protein transferase activity"/>
    <property type="evidence" value="ECO:0000250"/>
    <property type="project" value="UniProtKB"/>
</dbReference>
<dbReference type="GO" id="GO:0008270">
    <property type="term" value="F:zinc ion binding"/>
    <property type="evidence" value="ECO:0000250"/>
    <property type="project" value="UniProtKB"/>
</dbReference>
<dbReference type="GO" id="GO:0002250">
    <property type="term" value="P:adaptive immune response"/>
    <property type="evidence" value="ECO:0007669"/>
    <property type="project" value="TreeGrafter"/>
</dbReference>
<dbReference type="GO" id="GO:0030183">
    <property type="term" value="P:B cell differentiation"/>
    <property type="evidence" value="ECO:0000250"/>
    <property type="project" value="UniProtKB"/>
</dbReference>
<dbReference type="GO" id="GO:0006325">
    <property type="term" value="P:chromatin organization"/>
    <property type="evidence" value="ECO:0007669"/>
    <property type="project" value="UniProtKB-KW"/>
</dbReference>
<dbReference type="GO" id="GO:0002331">
    <property type="term" value="P:pre-B cell allelic exclusion"/>
    <property type="evidence" value="ECO:0000250"/>
    <property type="project" value="UniProtKB"/>
</dbReference>
<dbReference type="GO" id="GO:0051865">
    <property type="term" value="P:protein autoubiquitination"/>
    <property type="evidence" value="ECO:0000250"/>
    <property type="project" value="UniProtKB"/>
</dbReference>
<dbReference type="GO" id="GO:0033077">
    <property type="term" value="P:T cell differentiation in thymus"/>
    <property type="evidence" value="ECO:0000250"/>
    <property type="project" value="UniProtKB"/>
</dbReference>
<dbReference type="GO" id="GO:0033151">
    <property type="term" value="P:V(D)J recombination"/>
    <property type="evidence" value="ECO:0000250"/>
    <property type="project" value="UniProtKB"/>
</dbReference>
<dbReference type="CDD" id="cd16530">
    <property type="entry name" value="RING-HC_RAG1"/>
    <property type="match status" value="1"/>
</dbReference>
<dbReference type="FunFam" id="3.30.160.60:FF:000697">
    <property type="entry name" value="Recombination activating gene 1"/>
    <property type="match status" value="1"/>
</dbReference>
<dbReference type="FunFam" id="3.30.40.10:FF:000142">
    <property type="entry name" value="Recombination activating gene 1"/>
    <property type="match status" value="1"/>
</dbReference>
<dbReference type="Gene3D" id="6.10.140.510">
    <property type="match status" value="1"/>
</dbReference>
<dbReference type="Gene3D" id="3.30.160.60">
    <property type="entry name" value="Classic Zinc Finger"/>
    <property type="match status" value="1"/>
</dbReference>
<dbReference type="Gene3D" id="3.30.40.10">
    <property type="entry name" value="Zinc/RING finger domain, C3HC4 (zinc finger)"/>
    <property type="match status" value="1"/>
</dbReference>
<dbReference type="InterPro" id="IPR024627">
    <property type="entry name" value="RAG1"/>
</dbReference>
<dbReference type="InterPro" id="IPR035714">
    <property type="entry name" value="RAG1_imp-bd"/>
</dbReference>
<dbReference type="InterPro" id="IPR019485">
    <property type="entry name" value="RAG1_Znf"/>
</dbReference>
<dbReference type="InterPro" id="IPR023336">
    <property type="entry name" value="RAG_nonamer-bd_dom"/>
</dbReference>
<dbReference type="InterPro" id="IPR036236">
    <property type="entry name" value="Znf_C2H2_sf"/>
</dbReference>
<dbReference type="InterPro" id="IPR018957">
    <property type="entry name" value="Znf_C3HC4_RING-type"/>
</dbReference>
<dbReference type="InterPro" id="IPR001841">
    <property type="entry name" value="Znf_RING"/>
</dbReference>
<dbReference type="InterPro" id="IPR013083">
    <property type="entry name" value="Znf_RING/FYVE/PHD"/>
</dbReference>
<dbReference type="InterPro" id="IPR017907">
    <property type="entry name" value="Znf_RING_CS"/>
</dbReference>
<dbReference type="PANTHER" id="PTHR11539:SF0">
    <property type="entry name" value="V(D)J RECOMBINATION-ACTIVATING PROTEIN 1"/>
    <property type="match status" value="1"/>
</dbReference>
<dbReference type="PANTHER" id="PTHR11539">
    <property type="entry name" value="VDJ RECOMBINATION ACTIVATING PROTEIN 1 RAG1"/>
    <property type="match status" value="1"/>
</dbReference>
<dbReference type="Pfam" id="PF12940">
    <property type="entry name" value="RAG1"/>
    <property type="match status" value="1"/>
</dbReference>
<dbReference type="Pfam" id="PF12560">
    <property type="entry name" value="RAG1_imp_bd"/>
    <property type="match status" value="1"/>
</dbReference>
<dbReference type="Pfam" id="PF00097">
    <property type="entry name" value="zf-C3HC4"/>
    <property type="match status" value="1"/>
</dbReference>
<dbReference type="Pfam" id="PF10426">
    <property type="entry name" value="zf-RAG1"/>
    <property type="match status" value="1"/>
</dbReference>
<dbReference type="SMART" id="SM00184">
    <property type="entry name" value="RING"/>
    <property type="match status" value="1"/>
</dbReference>
<dbReference type="SUPFAM" id="SSF57667">
    <property type="entry name" value="beta-beta-alpha zinc fingers"/>
    <property type="match status" value="1"/>
</dbReference>
<dbReference type="SUPFAM" id="SSF57850">
    <property type="entry name" value="RING/U-box"/>
    <property type="match status" value="1"/>
</dbReference>
<dbReference type="PROSITE" id="PS51487">
    <property type="entry name" value="NBD"/>
    <property type="match status" value="1"/>
</dbReference>
<dbReference type="PROSITE" id="PS51765">
    <property type="entry name" value="ZF_RAG1"/>
    <property type="match status" value="1"/>
</dbReference>
<dbReference type="PROSITE" id="PS00518">
    <property type="entry name" value="ZF_RING_1"/>
    <property type="match status" value="1"/>
</dbReference>
<dbReference type="PROSITE" id="PS50089">
    <property type="entry name" value="ZF_RING_2"/>
    <property type="match status" value="1"/>
</dbReference>
<gene>
    <name type="primary">RAG1</name>
</gene>
<comment type="function">
    <text evidence="1">Catalytic component of the RAG complex, a multiprotein complex that mediates the DNA cleavage phase during V(D)J recombination. V(D)J recombination assembles a diverse repertoire of immunoglobulin and T-cell receptor genes in developing B and T-lymphocytes through rearrangement of different V (variable), in some cases D (diversity), and J (joining) gene segments. In the RAG complex, RAG1 mediates the DNA-binding to the conserved recombination signal sequences (RSS) and catalyzes the DNA cleavage activities by introducing a double-strand break between the RSS and the adjacent coding segment. RAG2 is not a catalytic component but is required for all known catalytic activities. DNA cleavage occurs in 2 steps: a first nick is introduced in the top strand immediately upstream of the heptamer, generating a 3'-hydroxyl group that can attack the phosphodiester bond on the opposite strand in a direct transesterification reaction, thereby creating 4 DNA ends: 2 hairpin coding ends and 2 blunt, 5'-phosphorylated ends. The chromatin structure plays an essential role in the V(D)J recombination reactions and the presence of histone H3 trimethylated at 'Lys-4' (H3K4me3) stimulates both the nicking and haipinning steps. The RAG complex also plays a role in pre-B cell allelic exclusion, a process leading to expression of a single immunoglobulin heavy chain allele to enforce clonality and monospecific recognition by the B-cell antigen receptor (BCR) expressed on individual B-lymphocytes. The introduction of DNA breaks by the RAG complex on one immunoglobulin allele induces ATM-dependent repositioning of the other allele to pericentromeric heterochromatin, preventing accessibility to the RAG complex and recombination of the second allele. In addition to its endonuclease activity, RAG1 also acts as an E3 ubiquitin-protein ligase that mediates monoubiquitination of histone H3. Histone H3 monoubiquitination is required for the joining step of V(D)J recombination. Mediates polyubiquitination of KPNA1 (By similarity).</text>
</comment>
<comment type="catalytic activity">
    <reaction>
        <text>S-ubiquitinyl-[E2 ubiquitin-conjugating enzyme]-L-cysteine + [acceptor protein]-L-lysine = [E2 ubiquitin-conjugating enzyme]-L-cysteine + N(6)-ubiquitinyl-[acceptor protein]-L-lysine.</text>
        <dbReference type="EC" id="2.3.2.27"/>
    </reaction>
</comment>
<comment type="cofactor">
    <cofactor evidence="1">
        <name>Mg(2+)</name>
        <dbReference type="ChEBI" id="CHEBI:18420"/>
    </cofactor>
    <cofactor evidence="1">
        <name>Mn(2+)</name>
        <dbReference type="ChEBI" id="CHEBI:29035"/>
    </cofactor>
    <text evidence="1">Binds 1 divalent metal cation per subunit. Mg(2+) or Mn(2+).</text>
</comment>
<comment type="subunit">
    <text evidence="1">Homodimer. Component of the RAG complex composed of core components RAG1 and RAG2, and associated component HMGB1 or HMGB2. Interacts with DCAF1, leading to recruitment of the CUL4A-RBX1-DDB1-DCAF1/VPRBP complex to ubiquitinate proteins and limit error-prone repair during V(D)J recombination (By similarity).</text>
</comment>
<comment type="subcellular location">
    <subcellularLocation>
        <location evidence="4">Nucleus</location>
    </subcellularLocation>
</comment>
<comment type="domain">
    <text evidence="1">The RING-type zinc finger mediates the E3 ubiquitin-protein ligase activity.</text>
</comment>
<comment type="domain">
    <text evidence="4">The NBD (nonamer binding) DNA-binding domain mediates the specific binding to the nonamer RSS motif by forming a tightly interwoven homodimer that binds and synapses 2 nonamer elements, with each NBD making contact with both DNA molecules. Each RSS is composed of well-conserved heptamer (consensus 5'-CACAGTG-3') and nonamer (consensus 5'-ACAAAAACC-3') sequences separated by a spacer of either 12 bp or 23 bp.</text>
</comment>
<comment type="PTM">
    <text evidence="1">Autoubiquitinated in the presence of CDC34/UBCH3.</text>
</comment>
<comment type="similarity">
    <text evidence="4">Belongs to the RAG1 family.</text>
</comment>
<keyword id="KW-0156">Chromatin regulator</keyword>
<keyword id="KW-0233">DNA recombination</keyword>
<keyword id="KW-0238">DNA-binding</keyword>
<keyword id="KW-0255">Endonuclease</keyword>
<keyword id="KW-0378">Hydrolase</keyword>
<keyword id="KW-1017">Isopeptide bond</keyword>
<keyword id="KW-0479">Metal-binding</keyword>
<keyword id="KW-0511">Multifunctional enzyme</keyword>
<keyword id="KW-0540">Nuclease</keyword>
<keyword id="KW-0539">Nucleus</keyword>
<keyword id="KW-1185">Reference proteome</keyword>
<keyword id="KW-0808">Transferase</keyword>
<keyword id="KW-0832">Ubl conjugation</keyword>
<keyword id="KW-0833">Ubl conjugation pathway</keyword>
<keyword id="KW-0862">Zinc</keyword>
<keyword id="KW-0863">Zinc-finger</keyword>
<sequence>MAVSCTPTLGLSSAPDEIQHPHIKFSEWKFKLFRVRSFEKTTEENQKEKNSSEGKPSLEQSPAVLDKASGQKPEVAPPAFKVHPKFSKKFHDDGKARDKAIHQANLRHLCRICGNSLKTDEHNRRYPVHGPVDSKTQGLLRKKEKKATSWPDLIAKVFRIDVKTDVDSIHPTEFCHNCWRIMHRKFSGAPCEVYFPRNATMEWHPHAPSCDICYTARRGLKRRNHQPNVQLSKKLKTVLDQARQARQRKRRVQARITSKEVMKMIANCSKIHLSTKLLAVDFPAHFVKSISCQICEHILADPVETSCKHVFCRICILRCLKVMGSYCPSCQYPCFPTDLESPVKSFLCILNSLIVKCSAPECNEEVSLEKYNHHVSSHKESRDTFVHINKGGRPRQHLLSLTRRAQKHRLRELKLQVKAFADKEEGGDVKSVCLTLFLLALRARNEHRQADELEAIMQGRGSGLQPAVCLAIRVNTFLSCSQYHKMYRTVKAITGRQIFQPLHALRNAEKVLLPGYHPFEWQPPLKNVSSSTDVGIIDGLSGLSSSVDDYPVDTIAKRFRYDSALVSALMDMEEDILEGMRSQDLEDYLNGPFTVVVKESCDGMGDVTEKHGSGPAVPEKAVRFSFTVMKITIAHGSQNVKVFEEAKPNSELCCKPLCLMLADESDHETLTAILSPLIAEREAMKSSELMLEMGGILRTFKFIFRGTGYDEKLVREVEGLEASGSVYICTLCDATRLEASQNLVFHSITRSHAENLERYEVWRSNPYHESVEELRDRVKGVSAKPFIETVPSIDALHCDIGNAAEFYKIFQLEIGEVYKNPSASKEERKRWQATLDKHLRKKMNLKPIMRMNGNFARKLMTIETVEAVCELIPSKERHEALRELMELYLKMKPVWRSSCPAKECPESLCQYSFNSQRFAELLSTKFKYRYEGKITNYFHKTLAHVPEIIERDGSIGAWASEGNESGNKLFRRFRKMNARQSKCYEMEDVLKHHWLYTSKYLQKFMNAHNAVKNSGFTMNSQVSLEDPLGIEDSLESQYSMEF</sequence>
<feature type="chain" id="PRO_0000056007" description="V(D)J recombination-activating protein 1">
    <location>
        <begin position="1"/>
        <end position="1042"/>
    </location>
</feature>
<feature type="zinc finger region" description="RING-type" evidence="3">
    <location>
        <begin position="292"/>
        <end position="331"/>
    </location>
</feature>
<feature type="zinc finger region" description="RAG1-type" evidence="5">
    <location>
        <begin position="353"/>
        <end position="382"/>
    </location>
</feature>
<feature type="DNA-binding region" description="NBD" evidence="4">
    <location>
        <begin position="391"/>
        <end position="458"/>
    </location>
</feature>
<feature type="region of interest" description="Disordered" evidence="6">
    <location>
        <begin position="40"/>
        <end position="80"/>
    </location>
</feature>
<feature type="compositionally biased region" description="Basic and acidic residues" evidence="6">
    <location>
        <begin position="40"/>
        <end position="52"/>
    </location>
</feature>
<feature type="binding site" evidence="1">
    <location>
        <position position="268"/>
    </location>
    <ligand>
        <name>Zn(2+)</name>
        <dbReference type="ChEBI" id="CHEBI:29105"/>
        <label>1</label>
    </ligand>
</feature>
<feature type="binding site" evidence="1">
    <location>
        <position position="272"/>
    </location>
    <ligand>
        <name>Zn(2+)</name>
        <dbReference type="ChEBI" id="CHEBI:29105"/>
        <label>1</label>
    </ligand>
</feature>
<feature type="binding site" evidence="1">
    <location>
        <position position="292"/>
    </location>
    <ligand>
        <name>Zn(2+)</name>
        <dbReference type="ChEBI" id="CHEBI:29105"/>
        <label>2</label>
    </ligand>
</feature>
<feature type="binding site" evidence="1">
    <location>
        <position position="295"/>
    </location>
    <ligand>
        <name>Zn(2+)</name>
        <dbReference type="ChEBI" id="CHEBI:29105"/>
        <label>1</label>
    </ligand>
</feature>
<feature type="binding site" evidence="1">
    <location>
        <position position="295"/>
    </location>
    <ligand>
        <name>Zn(2+)</name>
        <dbReference type="ChEBI" id="CHEBI:29105"/>
        <label>2</label>
    </ligand>
</feature>
<feature type="binding site" evidence="1">
    <location>
        <position position="297"/>
    </location>
    <ligand>
        <name>Zn(2+)</name>
        <dbReference type="ChEBI" id="CHEBI:29105"/>
        <label>1</label>
    </ligand>
</feature>
<feature type="binding site" evidence="1">
    <location>
        <position position="307"/>
    </location>
    <ligand>
        <name>Zn(2+)</name>
        <dbReference type="ChEBI" id="CHEBI:29105"/>
        <label>3</label>
    </ligand>
</feature>
<feature type="binding site" evidence="1">
    <location>
        <position position="309"/>
    </location>
    <ligand>
        <name>Zn(2+)</name>
        <dbReference type="ChEBI" id="CHEBI:29105"/>
        <label>3</label>
    </ligand>
</feature>
<feature type="binding site" evidence="1">
    <location>
        <position position="312"/>
    </location>
    <ligand>
        <name>Zn(2+)</name>
        <dbReference type="ChEBI" id="CHEBI:29105"/>
        <label>2</label>
    </ligand>
</feature>
<feature type="binding site" evidence="1">
    <location>
        <position position="315"/>
    </location>
    <ligand>
        <name>Zn(2+)</name>
        <dbReference type="ChEBI" id="CHEBI:29105"/>
        <label>2</label>
    </ligand>
</feature>
<feature type="binding site" evidence="1">
    <location>
        <position position="327"/>
    </location>
    <ligand>
        <name>Zn(2+)</name>
        <dbReference type="ChEBI" id="CHEBI:29105"/>
        <label>3</label>
    </ligand>
</feature>
<feature type="binding site" evidence="1">
    <location>
        <position position="330"/>
    </location>
    <ligand>
        <name>Zn(2+)</name>
        <dbReference type="ChEBI" id="CHEBI:29105"/>
        <label>3</label>
    </ligand>
</feature>
<feature type="binding site" evidence="5">
    <location>
        <position position="357"/>
    </location>
    <ligand>
        <name>Zn(2+)</name>
        <dbReference type="ChEBI" id="CHEBI:29105"/>
        <label>4</label>
    </ligand>
</feature>
<feature type="binding site" evidence="5">
    <location>
        <position position="362"/>
    </location>
    <ligand>
        <name>Zn(2+)</name>
        <dbReference type="ChEBI" id="CHEBI:29105"/>
        <label>4</label>
    </ligand>
</feature>
<feature type="binding site" evidence="5">
    <location>
        <position position="374"/>
    </location>
    <ligand>
        <name>Zn(2+)</name>
        <dbReference type="ChEBI" id="CHEBI:29105"/>
        <label>4</label>
    </ligand>
</feature>
<feature type="binding site" evidence="5">
    <location>
        <position position="378"/>
    </location>
    <ligand>
        <name>Zn(2+)</name>
        <dbReference type="ChEBI" id="CHEBI:29105"/>
        <label>4</label>
    </ligand>
</feature>
<feature type="binding site" evidence="1">
    <location>
        <position position="602"/>
    </location>
    <ligand>
        <name>a divalent metal cation</name>
        <dbReference type="ChEBI" id="CHEBI:60240"/>
        <note>catalytic</note>
    </ligand>
</feature>
<feature type="binding site" evidence="1">
    <location>
        <position position="710"/>
    </location>
    <ligand>
        <name>a divalent metal cation</name>
        <dbReference type="ChEBI" id="CHEBI:60240"/>
        <note>catalytic</note>
    </ligand>
</feature>
<feature type="binding site" evidence="1">
    <location>
        <position position="964"/>
    </location>
    <ligand>
        <name>a divalent metal cation</name>
        <dbReference type="ChEBI" id="CHEBI:60240"/>
        <note>catalytic</note>
    </ligand>
</feature>
<feature type="site" description="Essential for DNA hairpin formation, participates in base-stacking interactions near the cleavage site" evidence="1">
    <location>
        <position position="895"/>
    </location>
</feature>
<feature type="cross-link" description="Glycyl lysine isopeptide (Lys-Gly) (interchain with G-Cter in ubiquitin)" evidence="2">
    <location>
        <position position="233"/>
    </location>
</feature>
<accession>P34088</accession>
<organism>
    <name type="scientific">Oryctolagus cuniculus</name>
    <name type="common">Rabbit</name>
    <dbReference type="NCBI Taxonomy" id="9986"/>
    <lineage>
        <taxon>Eukaryota</taxon>
        <taxon>Metazoa</taxon>
        <taxon>Chordata</taxon>
        <taxon>Craniata</taxon>
        <taxon>Vertebrata</taxon>
        <taxon>Euteleostomi</taxon>
        <taxon>Mammalia</taxon>
        <taxon>Eutheria</taxon>
        <taxon>Euarchontoglires</taxon>
        <taxon>Glires</taxon>
        <taxon>Lagomorpha</taxon>
        <taxon>Leporidae</taxon>
        <taxon>Oryctolagus</taxon>
    </lineage>
</organism>
<name>RAG1_RABIT</name>
<evidence type="ECO:0000250" key="1"/>
<evidence type="ECO:0000250" key="2">
    <source>
        <dbReference type="UniProtKB" id="P15919"/>
    </source>
</evidence>
<evidence type="ECO:0000255" key="3">
    <source>
        <dbReference type="PROSITE-ProRule" id="PRU00175"/>
    </source>
</evidence>
<evidence type="ECO:0000255" key="4">
    <source>
        <dbReference type="PROSITE-ProRule" id="PRU00820"/>
    </source>
</evidence>
<evidence type="ECO:0000255" key="5">
    <source>
        <dbReference type="PROSITE-ProRule" id="PRU01101"/>
    </source>
</evidence>
<evidence type="ECO:0000256" key="6">
    <source>
        <dbReference type="SAM" id="MobiDB-lite"/>
    </source>
</evidence>
<evidence type="ECO:0000305" key="7"/>
<protein>
    <recommendedName>
        <fullName>V(D)J recombination-activating protein 1</fullName>
        <shortName>RAG-1</shortName>
    </recommendedName>
    <domain>
        <recommendedName>
            <fullName>Endonuclease RAG1</fullName>
            <ecNumber>3.1.-.-</ecNumber>
        </recommendedName>
    </domain>
    <domain>
        <recommendedName>
            <fullName>E3 ubiquitin-protein ligase RAG1</fullName>
            <ecNumber>2.3.2.27</ecNumber>
        </recommendedName>
        <alternativeName>
            <fullName evidence="7">RING-type E3 ubiquitin transferase RAG1</fullName>
        </alternativeName>
    </domain>
</protein>